<keyword id="KW-0256">Endoplasmic reticulum</keyword>
<keyword id="KW-0325">Glycoprotein</keyword>
<keyword id="KW-0472">Membrane</keyword>
<keyword id="KW-0479">Metal-binding</keyword>
<keyword id="KW-1185">Reference proteome</keyword>
<keyword id="KW-0732">Signal</keyword>
<keyword id="KW-0808">Transferase</keyword>
<keyword id="KW-0812">Transmembrane</keyword>
<keyword id="KW-1133">Transmembrane helix</keyword>
<keyword id="KW-0862">Zinc</keyword>
<keyword id="KW-0863">Zinc-finger</keyword>
<organism>
    <name type="scientific">Mus musculus</name>
    <name type="common">Mouse</name>
    <dbReference type="NCBI Taxonomy" id="10090"/>
    <lineage>
        <taxon>Eukaryota</taxon>
        <taxon>Metazoa</taxon>
        <taxon>Chordata</taxon>
        <taxon>Craniata</taxon>
        <taxon>Vertebrata</taxon>
        <taxon>Euteleostomi</taxon>
        <taxon>Mammalia</taxon>
        <taxon>Eutheria</taxon>
        <taxon>Euarchontoglires</taxon>
        <taxon>Glires</taxon>
        <taxon>Rodentia</taxon>
        <taxon>Myomorpha</taxon>
        <taxon>Muroidea</taxon>
        <taxon>Muridae</taxon>
        <taxon>Murinae</taxon>
        <taxon>Mus</taxon>
        <taxon>Mus</taxon>
    </lineage>
</organism>
<comment type="function">
    <text evidence="1 8">E3 ubiquitin-protein ligase that acts as a negative regulator of NOD2 signaling by mediating ubiquitination and degradation of RIPK2 (By similarity). Also catalyzes ubiquitination and proteasomal degradation of CANX within the endoplasmic reticulum (By similarity). Could have a role in spermatogenesis (PubMed:10191088).</text>
</comment>
<comment type="catalytic activity">
    <reaction evidence="1">
        <text>S-ubiquitinyl-[E2 ubiquitin-conjugating enzyme]-L-cysteine + [acceptor protein]-L-lysine = [E2 ubiquitin-conjugating enzyme]-L-cysteine + N(6)-ubiquitinyl-[acceptor protein]-L-lysine.</text>
        <dbReference type="EC" id="2.3.2.27"/>
    </reaction>
</comment>
<comment type="pathway">
    <text evidence="1">Protein modification; protein ubiquitination.</text>
</comment>
<comment type="subunit">
    <text evidence="1">Interacts with CANX.</text>
</comment>
<comment type="subcellular location">
    <subcellularLocation>
        <location evidence="1">Endoplasmic reticulum membrane</location>
        <topology evidence="7">Single-pass type I membrane protein</topology>
    </subcellularLocation>
</comment>
<comment type="tissue specificity">
    <text evidence="5">Expressed exclusively in spermatids (at protein level).</text>
</comment>
<comment type="developmental stage">
    <text evidence="5">Detected in the testis from the postpubertal stage (23 days) onwards, with highest expression at 29 days.</text>
</comment>
<comment type="domain">
    <text evidence="1">The RING-type zinc finger is involved in CANX ubiquitination and degradation, but is not required for interaction with CANX.</text>
</comment>
<protein>
    <recommendedName>
        <fullName evidence="1">E3 ubiquitin-protein ligase ZNRF4</fullName>
        <ecNumber evidence="1">2.3.2.27</ecNumber>
    </recommendedName>
    <alternativeName>
        <fullName>RING-type E3 ubiquitin transferase ZNRF4</fullName>
    </alternativeName>
    <alternativeName>
        <fullName evidence="6">Sperizin</fullName>
    </alternativeName>
    <alternativeName>
        <fullName evidence="1">Zinc/RING finger protein 4</fullName>
    </alternativeName>
</protein>
<name>ZNRF4_MOUSE</name>
<sequence>MARFAWTRVAPVALVTFWLVLSLSPTDAQVNLSSVDFLDLPALLGVPVDPKRARGYLLVARPADACHAIEGPWPDNHSLDPLVLVRPLGCSWEQTGRRAQRAGATAASVGPEAPGQLREFEDLEVTVRCDQPARVLLPHAEPCPDPECHPVVVASWALARALALAASTLFVLRQLWPWVRGLGSRGTAVKTQTCQKAQVRTFTRLSDLCAICLDDYEEGERLKILPCAHAYHCRCIDPWFSRAAQRSCPLCKQSVASTHDGSTDGSVGGEEPPLPGHRPPIWAIQARLRSRRLELLARTVPCRRCSSTTSLGVAENVAQSEATSELS</sequence>
<reference evidence="9" key="1">
    <citation type="journal article" date="1999" name="Genomics">
        <title>Sperizin is a murine RING zinc-finger protein specifically expressed in haploid germ cells.</title>
        <authorList>
            <person name="Fujii T."/>
            <person name="Tamura K."/>
            <person name="Copeland N.G."/>
            <person name="Gilbert D.J."/>
            <person name="Jenkins N.A."/>
            <person name="Yomogida K."/>
            <person name="Tanaka H."/>
            <person name="Nishimune Y."/>
            <person name="Nojima H."/>
            <person name="Abiko Y."/>
        </authorList>
    </citation>
    <scope>NUCLEOTIDE SEQUENCE [MRNA]</scope>
    <scope>TISSUE SPECIFICITY</scope>
    <scope>DEVELOPMENTAL STAGE</scope>
    <source>
        <strain evidence="6">C57BL/6J</strain>
        <tissue evidence="6">Testis</tissue>
    </source>
</reference>
<reference key="2">
    <citation type="journal article" date="2005" name="Science">
        <title>The transcriptional landscape of the mammalian genome.</title>
        <authorList>
            <person name="Carninci P."/>
            <person name="Kasukawa T."/>
            <person name="Katayama S."/>
            <person name="Gough J."/>
            <person name="Frith M.C."/>
            <person name="Maeda N."/>
            <person name="Oyama R."/>
            <person name="Ravasi T."/>
            <person name="Lenhard B."/>
            <person name="Wells C."/>
            <person name="Kodzius R."/>
            <person name="Shimokawa K."/>
            <person name="Bajic V.B."/>
            <person name="Brenner S.E."/>
            <person name="Batalov S."/>
            <person name="Forrest A.R."/>
            <person name="Zavolan M."/>
            <person name="Davis M.J."/>
            <person name="Wilming L.G."/>
            <person name="Aidinis V."/>
            <person name="Allen J.E."/>
            <person name="Ambesi-Impiombato A."/>
            <person name="Apweiler R."/>
            <person name="Aturaliya R.N."/>
            <person name="Bailey T.L."/>
            <person name="Bansal M."/>
            <person name="Baxter L."/>
            <person name="Beisel K.W."/>
            <person name="Bersano T."/>
            <person name="Bono H."/>
            <person name="Chalk A.M."/>
            <person name="Chiu K.P."/>
            <person name="Choudhary V."/>
            <person name="Christoffels A."/>
            <person name="Clutterbuck D.R."/>
            <person name="Crowe M.L."/>
            <person name="Dalla E."/>
            <person name="Dalrymple B.P."/>
            <person name="de Bono B."/>
            <person name="Della Gatta G."/>
            <person name="di Bernardo D."/>
            <person name="Down T."/>
            <person name="Engstrom P."/>
            <person name="Fagiolini M."/>
            <person name="Faulkner G."/>
            <person name="Fletcher C.F."/>
            <person name="Fukushima T."/>
            <person name="Furuno M."/>
            <person name="Futaki S."/>
            <person name="Gariboldi M."/>
            <person name="Georgii-Hemming P."/>
            <person name="Gingeras T.R."/>
            <person name="Gojobori T."/>
            <person name="Green R.E."/>
            <person name="Gustincich S."/>
            <person name="Harbers M."/>
            <person name="Hayashi Y."/>
            <person name="Hensch T.K."/>
            <person name="Hirokawa N."/>
            <person name="Hill D."/>
            <person name="Huminiecki L."/>
            <person name="Iacono M."/>
            <person name="Ikeo K."/>
            <person name="Iwama A."/>
            <person name="Ishikawa T."/>
            <person name="Jakt M."/>
            <person name="Kanapin A."/>
            <person name="Katoh M."/>
            <person name="Kawasawa Y."/>
            <person name="Kelso J."/>
            <person name="Kitamura H."/>
            <person name="Kitano H."/>
            <person name="Kollias G."/>
            <person name="Krishnan S.P."/>
            <person name="Kruger A."/>
            <person name="Kummerfeld S.K."/>
            <person name="Kurochkin I.V."/>
            <person name="Lareau L.F."/>
            <person name="Lazarevic D."/>
            <person name="Lipovich L."/>
            <person name="Liu J."/>
            <person name="Liuni S."/>
            <person name="McWilliam S."/>
            <person name="Madan Babu M."/>
            <person name="Madera M."/>
            <person name="Marchionni L."/>
            <person name="Matsuda H."/>
            <person name="Matsuzawa S."/>
            <person name="Miki H."/>
            <person name="Mignone F."/>
            <person name="Miyake S."/>
            <person name="Morris K."/>
            <person name="Mottagui-Tabar S."/>
            <person name="Mulder N."/>
            <person name="Nakano N."/>
            <person name="Nakauchi H."/>
            <person name="Ng P."/>
            <person name="Nilsson R."/>
            <person name="Nishiguchi S."/>
            <person name="Nishikawa S."/>
            <person name="Nori F."/>
            <person name="Ohara O."/>
            <person name="Okazaki Y."/>
            <person name="Orlando V."/>
            <person name="Pang K.C."/>
            <person name="Pavan W.J."/>
            <person name="Pavesi G."/>
            <person name="Pesole G."/>
            <person name="Petrovsky N."/>
            <person name="Piazza S."/>
            <person name="Reed J."/>
            <person name="Reid J.F."/>
            <person name="Ring B.Z."/>
            <person name="Ringwald M."/>
            <person name="Rost B."/>
            <person name="Ruan Y."/>
            <person name="Salzberg S.L."/>
            <person name="Sandelin A."/>
            <person name="Schneider C."/>
            <person name="Schoenbach C."/>
            <person name="Sekiguchi K."/>
            <person name="Semple C.A."/>
            <person name="Seno S."/>
            <person name="Sessa L."/>
            <person name="Sheng Y."/>
            <person name="Shibata Y."/>
            <person name="Shimada H."/>
            <person name="Shimada K."/>
            <person name="Silva D."/>
            <person name="Sinclair B."/>
            <person name="Sperling S."/>
            <person name="Stupka E."/>
            <person name="Sugiura K."/>
            <person name="Sultana R."/>
            <person name="Takenaka Y."/>
            <person name="Taki K."/>
            <person name="Tammoja K."/>
            <person name="Tan S.L."/>
            <person name="Tang S."/>
            <person name="Taylor M.S."/>
            <person name="Tegner J."/>
            <person name="Teichmann S.A."/>
            <person name="Ueda H.R."/>
            <person name="van Nimwegen E."/>
            <person name="Verardo R."/>
            <person name="Wei C.L."/>
            <person name="Yagi K."/>
            <person name="Yamanishi H."/>
            <person name="Zabarovsky E."/>
            <person name="Zhu S."/>
            <person name="Zimmer A."/>
            <person name="Hide W."/>
            <person name="Bult C."/>
            <person name="Grimmond S.M."/>
            <person name="Teasdale R.D."/>
            <person name="Liu E.T."/>
            <person name="Brusic V."/>
            <person name="Quackenbush J."/>
            <person name="Wahlestedt C."/>
            <person name="Mattick J.S."/>
            <person name="Hume D.A."/>
            <person name="Kai C."/>
            <person name="Sasaki D."/>
            <person name="Tomaru Y."/>
            <person name="Fukuda S."/>
            <person name="Kanamori-Katayama M."/>
            <person name="Suzuki M."/>
            <person name="Aoki J."/>
            <person name="Arakawa T."/>
            <person name="Iida J."/>
            <person name="Imamura K."/>
            <person name="Itoh M."/>
            <person name="Kato T."/>
            <person name="Kawaji H."/>
            <person name="Kawagashira N."/>
            <person name="Kawashima T."/>
            <person name="Kojima M."/>
            <person name="Kondo S."/>
            <person name="Konno H."/>
            <person name="Nakano K."/>
            <person name="Ninomiya N."/>
            <person name="Nishio T."/>
            <person name="Okada M."/>
            <person name="Plessy C."/>
            <person name="Shibata K."/>
            <person name="Shiraki T."/>
            <person name="Suzuki S."/>
            <person name="Tagami M."/>
            <person name="Waki K."/>
            <person name="Watahiki A."/>
            <person name="Okamura-Oho Y."/>
            <person name="Suzuki H."/>
            <person name="Kawai J."/>
            <person name="Hayashizaki Y."/>
        </authorList>
    </citation>
    <scope>NUCLEOTIDE SEQUENCE [LARGE SCALE MRNA]</scope>
    <source>
        <strain>C57BL/6J</strain>
        <tissue>Testis</tissue>
    </source>
</reference>
<reference key="3">
    <citation type="journal article" date="2009" name="PLoS Biol.">
        <title>Lineage-specific biology revealed by a finished genome assembly of the mouse.</title>
        <authorList>
            <person name="Church D.M."/>
            <person name="Goodstadt L."/>
            <person name="Hillier L.W."/>
            <person name="Zody M.C."/>
            <person name="Goldstein S."/>
            <person name="She X."/>
            <person name="Bult C.J."/>
            <person name="Agarwala R."/>
            <person name="Cherry J.L."/>
            <person name="DiCuccio M."/>
            <person name="Hlavina W."/>
            <person name="Kapustin Y."/>
            <person name="Meric P."/>
            <person name="Maglott D."/>
            <person name="Birtle Z."/>
            <person name="Marques A.C."/>
            <person name="Graves T."/>
            <person name="Zhou S."/>
            <person name="Teague B."/>
            <person name="Potamousis K."/>
            <person name="Churas C."/>
            <person name="Place M."/>
            <person name="Herschleb J."/>
            <person name="Runnheim R."/>
            <person name="Forrest D."/>
            <person name="Amos-Landgraf J."/>
            <person name="Schwartz D.C."/>
            <person name="Cheng Z."/>
            <person name="Lindblad-Toh K."/>
            <person name="Eichler E.E."/>
            <person name="Ponting C.P."/>
        </authorList>
    </citation>
    <scope>NUCLEOTIDE SEQUENCE [LARGE SCALE GENOMIC DNA]</scope>
    <source>
        <strain>C57BL/6J</strain>
    </source>
</reference>
<reference key="4">
    <citation type="journal article" date="2004" name="Genome Res.">
        <title>The status, quality, and expansion of the NIH full-length cDNA project: the Mammalian Gene Collection (MGC).</title>
        <authorList>
            <consortium name="The MGC Project Team"/>
        </authorList>
    </citation>
    <scope>NUCLEOTIDE SEQUENCE [LARGE SCALE MRNA]</scope>
    <source>
        <tissue>Brain</tissue>
    </source>
</reference>
<reference key="5">
    <citation type="journal article" date="2010" name="Cell">
        <title>A tissue-specific atlas of mouse protein phosphorylation and expression.</title>
        <authorList>
            <person name="Huttlin E.L."/>
            <person name="Jedrychowski M.P."/>
            <person name="Elias J.E."/>
            <person name="Goswami T."/>
            <person name="Rad R."/>
            <person name="Beausoleil S.A."/>
            <person name="Villen J."/>
            <person name="Haas W."/>
            <person name="Sowa M.E."/>
            <person name="Gygi S.P."/>
        </authorList>
    </citation>
    <scope>IDENTIFICATION BY MASS SPECTROMETRY [LARGE SCALE ANALYSIS]</scope>
    <source>
        <tissue>Testis</tissue>
    </source>
</reference>
<accession>Q9DAH2</accession>
<accession>Q9WTN2</accession>
<gene>
    <name evidence="10" type="primary">Znrf4</name>
    <name evidence="6" type="synonym">Spzn</name>
</gene>
<dbReference type="EC" id="2.3.2.27" evidence="1"/>
<dbReference type="EMBL" id="AB016984">
    <property type="protein sequence ID" value="BAA77407.1"/>
    <property type="molecule type" value="mRNA"/>
</dbReference>
<dbReference type="EMBL" id="AK005843">
    <property type="protein sequence ID" value="BAB24269.1"/>
    <property type="molecule type" value="mRNA"/>
</dbReference>
<dbReference type="EMBL" id="CT485788">
    <property type="status" value="NOT_ANNOTATED_CDS"/>
    <property type="molecule type" value="Genomic_DNA"/>
</dbReference>
<dbReference type="EMBL" id="BC140986">
    <property type="protein sequence ID" value="AAI40987.1"/>
    <property type="molecule type" value="mRNA"/>
</dbReference>
<dbReference type="CCDS" id="CCDS28906.1"/>
<dbReference type="RefSeq" id="NP_035613.2">
    <property type="nucleotide sequence ID" value="NM_011483.2"/>
</dbReference>
<dbReference type="SMR" id="Q9DAH2"/>
<dbReference type="FunCoup" id="Q9DAH2">
    <property type="interactions" value="16"/>
</dbReference>
<dbReference type="STRING" id="10090.ENSMUSP00000059715"/>
<dbReference type="GlyCosmos" id="Q9DAH2">
    <property type="glycosylation" value="1 site, No reported glycans"/>
</dbReference>
<dbReference type="GlyGen" id="Q9DAH2">
    <property type="glycosylation" value="1 site"/>
</dbReference>
<dbReference type="PhosphoSitePlus" id="Q9DAH2"/>
<dbReference type="SwissPalm" id="Q9DAH2"/>
<dbReference type="PaxDb" id="10090-ENSMUSP00000059715"/>
<dbReference type="ProteomicsDB" id="275307"/>
<dbReference type="Antibodypedia" id="2299">
    <property type="antibodies" value="108 antibodies from 18 providers"/>
</dbReference>
<dbReference type="DNASU" id="20834"/>
<dbReference type="Ensembl" id="ENSMUST00000052211.4">
    <property type="protein sequence ID" value="ENSMUSP00000059715.3"/>
    <property type="gene ID" value="ENSMUSG00000044526.4"/>
</dbReference>
<dbReference type="GeneID" id="20834"/>
<dbReference type="KEGG" id="mmu:20834"/>
<dbReference type="UCSC" id="uc008dce.1">
    <property type="organism name" value="mouse"/>
</dbReference>
<dbReference type="AGR" id="MGI:1341258"/>
<dbReference type="CTD" id="148066"/>
<dbReference type="MGI" id="MGI:1341258">
    <property type="gene designation" value="Znrf4"/>
</dbReference>
<dbReference type="VEuPathDB" id="HostDB:ENSMUSG00000044526"/>
<dbReference type="eggNOG" id="KOG4628">
    <property type="taxonomic scope" value="Eukaryota"/>
</dbReference>
<dbReference type="GeneTree" id="ENSGT00940000163061"/>
<dbReference type="HOGENOM" id="CLU_035275_1_0_1"/>
<dbReference type="InParanoid" id="Q9DAH2"/>
<dbReference type="OMA" id="AYHCRCI"/>
<dbReference type="OrthoDB" id="8062037at2759"/>
<dbReference type="PhylomeDB" id="Q9DAH2"/>
<dbReference type="TreeFam" id="TF317486"/>
<dbReference type="UniPathway" id="UPA00143"/>
<dbReference type="BioGRID-ORCS" id="20834">
    <property type="hits" value="2 hits in 79 CRISPR screens"/>
</dbReference>
<dbReference type="PRO" id="PR:Q9DAH2"/>
<dbReference type="Proteomes" id="UP000000589">
    <property type="component" value="Chromosome 17"/>
</dbReference>
<dbReference type="RNAct" id="Q9DAH2">
    <property type="molecule type" value="protein"/>
</dbReference>
<dbReference type="Bgee" id="ENSMUSG00000044526">
    <property type="expression patterns" value="Expressed in spermatid and 5 other cell types or tissues"/>
</dbReference>
<dbReference type="GO" id="GO:0005737">
    <property type="term" value="C:cytoplasm"/>
    <property type="evidence" value="ECO:0000314"/>
    <property type="project" value="MGI"/>
</dbReference>
<dbReference type="GO" id="GO:0005783">
    <property type="term" value="C:endoplasmic reticulum"/>
    <property type="evidence" value="ECO:0000250"/>
    <property type="project" value="UniProtKB"/>
</dbReference>
<dbReference type="GO" id="GO:0005789">
    <property type="term" value="C:endoplasmic reticulum membrane"/>
    <property type="evidence" value="ECO:0007669"/>
    <property type="project" value="UniProtKB-SubCell"/>
</dbReference>
<dbReference type="GO" id="GO:0061630">
    <property type="term" value="F:ubiquitin protein ligase activity"/>
    <property type="evidence" value="ECO:0000250"/>
    <property type="project" value="UniProtKB"/>
</dbReference>
<dbReference type="GO" id="GO:0008270">
    <property type="term" value="F:zinc ion binding"/>
    <property type="evidence" value="ECO:0007669"/>
    <property type="project" value="UniProtKB-KW"/>
</dbReference>
<dbReference type="GO" id="GO:0016567">
    <property type="term" value="P:protein ubiquitination"/>
    <property type="evidence" value="ECO:0007669"/>
    <property type="project" value="UniProtKB-UniPathway"/>
</dbReference>
<dbReference type="CDD" id="cd02123">
    <property type="entry name" value="PA_C_RZF_like"/>
    <property type="match status" value="1"/>
</dbReference>
<dbReference type="CDD" id="cd16665">
    <property type="entry name" value="RING-H2_RNF13-like"/>
    <property type="match status" value="1"/>
</dbReference>
<dbReference type="FunFam" id="3.30.40.10:FF:000501">
    <property type="entry name" value="E3 ubiquitin-protein ligase ZNRF4"/>
    <property type="match status" value="1"/>
</dbReference>
<dbReference type="Gene3D" id="3.30.40.10">
    <property type="entry name" value="Zinc/RING finger domain, C3HC4 (zinc finger)"/>
    <property type="match status" value="1"/>
</dbReference>
<dbReference type="InterPro" id="IPR051834">
    <property type="entry name" value="RING_finger_E3_ligase"/>
</dbReference>
<dbReference type="InterPro" id="IPR001841">
    <property type="entry name" value="Znf_RING"/>
</dbReference>
<dbReference type="InterPro" id="IPR013083">
    <property type="entry name" value="Znf_RING/FYVE/PHD"/>
</dbReference>
<dbReference type="InterPro" id="IPR044744">
    <property type="entry name" value="ZNRF4/RNF13/RNF167_PA"/>
</dbReference>
<dbReference type="PANTHER" id="PTHR45931:SF20">
    <property type="entry name" value="RING-TYPE E3 UBIQUITIN TRANSFERASE"/>
    <property type="match status" value="1"/>
</dbReference>
<dbReference type="PANTHER" id="PTHR45931">
    <property type="entry name" value="SI:CH211-59O9.10"/>
    <property type="match status" value="1"/>
</dbReference>
<dbReference type="Pfam" id="PF13639">
    <property type="entry name" value="zf-RING_2"/>
    <property type="match status" value="1"/>
</dbReference>
<dbReference type="SMART" id="SM00184">
    <property type="entry name" value="RING"/>
    <property type="match status" value="1"/>
</dbReference>
<dbReference type="SUPFAM" id="SSF57850">
    <property type="entry name" value="RING/U-box"/>
    <property type="match status" value="1"/>
</dbReference>
<dbReference type="PROSITE" id="PS50089">
    <property type="entry name" value="ZF_RING_2"/>
    <property type="match status" value="1"/>
</dbReference>
<evidence type="ECO:0000250" key="1">
    <source>
        <dbReference type="UniProtKB" id="Q8WWF5"/>
    </source>
</evidence>
<evidence type="ECO:0000255" key="2"/>
<evidence type="ECO:0000255" key="3">
    <source>
        <dbReference type="PROSITE-ProRule" id="PRU00175"/>
    </source>
</evidence>
<evidence type="ECO:0000256" key="4">
    <source>
        <dbReference type="SAM" id="MobiDB-lite"/>
    </source>
</evidence>
<evidence type="ECO:0000269" key="5">
    <source>
    </source>
</evidence>
<evidence type="ECO:0000303" key="6">
    <source>
    </source>
</evidence>
<evidence type="ECO:0000305" key="7"/>
<evidence type="ECO:0000305" key="8">
    <source>
    </source>
</evidence>
<evidence type="ECO:0000312" key="9">
    <source>
        <dbReference type="EMBL" id="BAA77407.1"/>
    </source>
</evidence>
<evidence type="ECO:0000312" key="10">
    <source>
        <dbReference type="MGI" id="MGI:1341258"/>
    </source>
</evidence>
<feature type="signal peptide" evidence="2">
    <location>
        <begin position="1"/>
        <end position="28"/>
    </location>
</feature>
<feature type="chain" id="PRO_5004325102" description="E3 ubiquitin-protein ligase ZNRF4">
    <location>
        <begin position="29"/>
        <end position="327"/>
    </location>
</feature>
<feature type="topological domain" description="Lumenal" evidence="7">
    <location>
        <begin position="29"/>
        <end position="150"/>
    </location>
</feature>
<feature type="transmembrane region" description="Helical" evidence="2">
    <location>
        <begin position="151"/>
        <end position="171"/>
    </location>
</feature>
<feature type="topological domain" description="Cytoplasmic" evidence="7">
    <location>
        <begin position="172"/>
        <end position="327"/>
    </location>
</feature>
<feature type="zinc finger region" description="RING-type; atypical" evidence="3">
    <location>
        <begin position="209"/>
        <end position="252"/>
    </location>
</feature>
<feature type="region of interest" description="Disordered" evidence="4">
    <location>
        <begin position="256"/>
        <end position="279"/>
    </location>
</feature>
<feature type="compositionally biased region" description="Polar residues" evidence="4">
    <location>
        <begin position="256"/>
        <end position="265"/>
    </location>
</feature>
<feature type="glycosylation site" description="N-linked (GlcNAc...) asparagine" evidence="2">
    <location>
        <position position="31"/>
    </location>
</feature>
<feature type="sequence conflict" description="In Ref. 1; BAA77407." evidence="7" ref="1">
    <original>W</original>
    <variation>G</variation>
    <location>
        <position position="73"/>
    </location>
</feature>
<feature type="sequence conflict" description="In Ref. 1; BAA77407." evidence="7" ref="1">
    <original>AQR</original>
    <variation>GA</variation>
    <location>
        <begin position="244"/>
        <end position="246"/>
    </location>
</feature>
<proteinExistence type="evidence at protein level"/>